<proteinExistence type="predicted"/>
<sequence length="321" mass="36503">MDFCLLNEKSQIFVHAEPYAVSDYVNQYVGTHSIRLPKGGRPAGRLHHRIFGCLDLCRISYGGSVRVISPGLETCYHLQIILKGHCLWRGHGQEHYFAPGELLLLNPDDQADLTYSEDCEKFIVKLPSVVLDRACSDNNWHKPREGIRFAARHNLQQLDGFINLLGLVCDEAEHTKSMPRVQEHYAGIIASKLLEMLGSNVSREIFSKGNPSFERVVQFIEENLKRNISLERLAELAMMSPRSLYNLFEKHAGTTPKNYIRNRKLESIRACLNDPSANVRSITEIALDYGFLHLGRFAENYRSAFGELPSDTLRQCKKEVA</sequence>
<feature type="chain" id="PRO_0000194601" description="XylDLEGF operon transcriptional activator">
    <location>
        <begin position="1"/>
        <end position="321"/>
    </location>
</feature>
<feature type="domain" description="HTH araC/xylS-type" evidence="1">
    <location>
        <begin position="214"/>
        <end position="315"/>
    </location>
</feature>
<feature type="DNA-binding region" description="H-T-H motif" evidence="1">
    <location>
        <begin position="231"/>
        <end position="252"/>
    </location>
</feature>
<feature type="DNA-binding region" description="H-T-H motif" evidence="1">
    <location>
        <begin position="282"/>
        <end position="305"/>
    </location>
</feature>
<dbReference type="EMBL" id="M10143">
    <property type="protein sequence ID" value="AAB59163.1"/>
    <property type="molecule type" value="Genomic_DNA"/>
</dbReference>
<dbReference type="EMBL" id="M15740">
    <property type="protein sequence ID" value="AAA26029.1"/>
    <property type="molecule type" value="Genomic_DNA"/>
</dbReference>
<dbReference type="PIR" id="A24987">
    <property type="entry name" value="A24987"/>
</dbReference>
<dbReference type="RefSeq" id="NP_542858.1">
    <property type="nucleotide sequence ID" value="NC_003350.1"/>
</dbReference>
<dbReference type="RefSeq" id="WP_011005901.1">
    <property type="nucleotide sequence ID" value="NZ_LT852425.1"/>
</dbReference>
<dbReference type="SMR" id="P07859"/>
<dbReference type="GO" id="GO:0005737">
    <property type="term" value="C:cytoplasm"/>
    <property type="evidence" value="ECO:0007669"/>
    <property type="project" value="UniProtKB-SubCell"/>
</dbReference>
<dbReference type="GO" id="GO:0003700">
    <property type="term" value="F:DNA-binding transcription factor activity"/>
    <property type="evidence" value="ECO:0007669"/>
    <property type="project" value="InterPro"/>
</dbReference>
<dbReference type="GO" id="GO:0043565">
    <property type="term" value="F:sequence-specific DNA binding"/>
    <property type="evidence" value="ECO:0007669"/>
    <property type="project" value="InterPro"/>
</dbReference>
<dbReference type="GO" id="GO:0009056">
    <property type="term" value="P:catabolic process"/>
    <property type="evidence" value="ECO:0007669"/>
    <property type="project" value="UniProtKB-KW"/>
</dbReference>
<dbReference type="GO" id="GO:0009893">
    <property type="term" value="P:positive regulation of metabolic process"/>
    <property type="evidence" value="ECO:0007669"/>
    <property type="project" value="UniProtKB-ARBA"/>
</dbReference>
<dbReference type="Gene3D" id="1.10.10.60">
    <property type="entry name" value="Homeodomain-like"/>
    <property type="match status" value="1"/>
</dbReference>
<dbReference type="InterPro" id="IPR035418">
    <property type="entry name" value="AraC-bd_2"/>
</dbReference>
<dbReference type="InterPro" id="IPR050204">
    <property type="entry name" value="AraC_XylS_family_regulators"/>
</dbReference>
<dbReference type="InterPro" id="IPR009057">
    <property type="entry name" value="Homeodomain-like_sf"/>
</dbReference>
<dbReference type="InterPro" id="IPR037923">
    <property type="entry name" value="HTH-like"/>
</dbReference>
<dbReference type="InterPro" id="IPR018060">
    <property type="entry name" value="HTH_AraC"/>
</dbReference>
<dbReference type="InterPro" id="IPR018062">
    <property type="entry name" value="HTH_AraC-typ_CS"/>
</dbReference>
<dbReference type="PANTHER" id="PTHR46796:SF6">
    <property type="entry name" value="ARAC SUBFAMILY"/>
    <property type="match status" value="1"/>
</dbReference>
<dbReference type="PANTHER" id="PTHR46796">
    <property type="entry name" value="HTH-TYPE TRANSCRIPTIONAL ACTIVATOR RHAS-RELATED"/>
    <property type="match status" value="1"/>
</dbReference>
<dbReference type="Pfam" id="PF14525">
    <property type="entry name" value="AraC_binding_2"/>
    <property type="match status" value="1"/>
</dbReference>
<dbReference type="Pfam" id="PF12833">
    <property type="entry name" value="HTH_18"/>
    <property type="match status" value="1"/>
</dbReference>
<dbReference type="SMART" id="SM00342">
    <property type="entry name" value="HTH_ARAC"/>
    <property type="match status" value="1"/>
</dbReference>
<dbReference type="SUPFAM" id="SSF46689">
    <property type="entry name" value="Homeodomain-like"/>
    <property type="match status" value="1"/>
</dbReference>
<dbReference type="SUPFAM" id="SSF51215">
    <property type="entry name" value="Regulatory protein AraC"/>
    <property type="match status" value="1"/>
</dbReference>
<dbReference type="PROSITE" id="PS00041">
    <property type="entry name" value="HTH_ARAC_FAMILY_1"/>
    <property type="match status" value="1"/>
</dbReference>
<dbReference type="PROSITE" id="PS01124">
    <property type="entry name" value="HTH_ARAC_FAMILY_2"/>
    <property type="match status" value="1"/>
</dbReference>
<accession>P07859</accession>
<keyword id="KW-0010">Activator</keyword>
<keyword id="KW-0058">Aromatic hydrocarbons catabolism</keyword>
<keyword id="KW-0963">Cytoplasm</keyword>
<keyword id="KW-0238">DNA-binding</keyword>
<keyword id="KW-0614">Plasmid</keyword>
<keyword id="KW-0804">Transcription</keyword>
<keyword id="KW-0805">Transcription regulation</keyword>
<gene>
    <name type="primary">xylS</name>
</gene>
<organism>
    <name type="scientific">Pseudomonas putida</name>
    <name type="common">Arthrobacter siderocapsulatus</name>
    <dbReference type="NCBI Taxonomy" id="303"/>
    <lineage>
        <taxon>Bacteria</taxon>
        <taxon>Pseudomonadati</taxon>
        <taxon>Pseudomonadota</taxon>
        <taxon>Gammaproteobacteria</taxon>
        <taxon>Pseudomonadales</taxon>
        <taxon>Pseudomonadaceae</taxon>
        <taxon>Pseudomonas</taxon>
    </lineage>
</organism>
<geneLocation type="plasmid">
    <name>TOL pWW0</name>
</geneLocation>
<evidence type="ECO:0000255" key="1">
    <source>
        <dbReference type="PROSITE-ProRule" id="PRU00593"/>
    </source>
</evidence>
<name>XYLS_PSEPU</name>
<reference key="1">
    <citation type="journal article" date="1986" name="Gene">
        <title>Nucleotide sequence of the regulatory gene xylS on the Pseudomonas putida TOL plasmid and identification of the protein product.</title>
        <authorList>
            <person name="Inouye S."/>
            <person name="Nakazawa A."/>
            <person name="Nakazawa T."/>
        </authorList>
    </citation>
    <scope>NUCLEOTIDE SEQUENCE [GENOMIC DNA]</scope>
</reference>
<reference key="2">
    <citation type="journal article" date="1987" name="Mol. Gen. Genet.">
        <title>The xylS gene positive regulator of TOL plasmid pWWO: identification, sequence analysis and overproduction leading to constitutive expression of meta cleavage operon.</title>
        <authorList>
            <person name="Mermod N."/>
            <person name="Ramos J.L."/>
            <person name="Bairoch A."/>
            <person name="Timmis K.N."/>
        </authorList>
    </citation>
    <scope>NUCLEOTIDE SEQUENCE [GENOMIC DNA]</scope>
</reference>
<reference key="3">
    <citation type="journal article" date="1986" name="J. Gen. Microbiol.">
        <title>Genetic, functional and sequence analysis of the xylR and xylS regulatory genes of the TOL plasmid pWW0.</title>
        <authorList>
            <person name="Spooner R.A."/>
            <person name="Lindsay K."/>
            <person name="Franklin F.C.H."/>
        </authorList>
    </citation>
    <scope>NUCLEOTIDE SEQUENCE [GENOMIC DNA]</scope>
    <source>
        <strain>ATCC 33015 / DSM 3931 / JCM 6156 / NCIMB 12182 / mt-2</strain>
    </source>
</reference>
<protein>
    <recommendedName>
        <fullName>XylDLEGF operon transcriptional activator</fullName>
    </recommendedName>
</protein>
<comment type="function">
    <text>Regulatory protein of the TOL plasmid xyl operons. XylS activates the xylXYZLTEGFJQKIH operon required for the degradation of toluene, m-xylene and p-xylene.</text>
</comment>
<comment type="subcellular location">
    <subcellularLocation>
        <location>Cytoplasm</location>
    </subcellularLocation>
</comment>